<sequence length="186" mass="20712">MNVLSIMDDLKRRMDGAISAFQHELGGLRTGRASASLLEPLTVEAYGSVVHINQVANISVPEPRMLSVSVWDKTMVGAVERAIRDSGLGLNPITDGMNLRIPLPELNEERRKELVKIAHQYAEQARVATRHVRRDGMDNLKKLEKEGEISQDEAHGLSEKVQKLTDETIANIDKILAVKESEIMHV</sequence>
<protein>
    <recommendedName>
        <fullName evidence="1">Ribosome-recycling factor</fullName>
        <shortName evidence="1">RRF</shortName>
    </recommendedName>
    <alternativeName>
        <fullName evidence="1">Ribosome-releasing factor</fullName>
    </alternativeName>
</protein>
<name>RRF_BARQU</name>
<proteinExistence type="inferred from homology"/>
<reference key="1">
    <citation type="journal article" date="2004" name="Proc. Natl. Acad. Sci. U.S.A.">
        <title>The louse-borne human pathogen Bartonella quintana is a genomic derivative of the zoonotic agent Bartonella henselae.</title>
        <authorList>
            <person name="Alsmark U.C.M."/>
            <person name="Frank A.C."/>
            <person name="Karlberg E.O."/>
            <person name="Legault B.-A."/>
            <person name="Ardell D.H."/>
            <person name="Canbaeck B."/>
            <person name="Eriksson A.-S."/>
            <person name="Naeslund A.K."/>
            <person name="Handley S.A."/>
            <person name="Huvet M."/>
            <person name="La Scola B."/>
            <person name="Holmberg M."/>
            <person name="Andersson S.G.E."/>
        </authorList>
    </citation>
    <scope>NUCLEOTIDE SEQUENCE [LARGE SCALE GENOMIC DNA]</scope>
    <source>
        <strain>Toulouse</strain>
    </source>
</reference>
<feature type="chain" id="PRO_0000167416" description="Ribosome-recycling factor">
    <location>
        <begin position="1"/>
        <end position="186"/>
    </location>
</feature>
<accession>Q6FZN3</accession>
<dbReference type="EMBL" id="BX897700">
    <property type="protein sequence ID" value="CAF26187.1"/>
    <property type="molecule type" value="Genomic_DNA"/>
</dbReference>
<dbReference type="RefSeq" id="WP_011179442.1">
    <property type="nucleotide sequence ID" value="NC_005955.1"/>
</dbReference>
<dbReference type="SMR" id="Q6FZN3"/>
<dbReference type="KEGG" id="bqu:BQ06980"/>
<dbReference type="eggNOG" id="COG0233">
    <property type="taxonomic scope" value="Bacteria"/>
</dbReference>
<dbReference type="HOGENOM" id="CLU_073981_2_0_5"/>
<dbReference type="OrthoDB" id="9804006at2"/>
<dbReference type="Proteomes" id="UP000000597">
    <property type="component" value="Chromosome"/>
</dbReference>
<dbReference type="GO" id="GO:0005829">
    <property type="term" value="C:cytosol"/>
    <property type="evidence" value="ECO:0007669"/>
    <property type="project" value="GOC"/>
</dbReference>
<dbReference type="GO" id="GO:0043023">
    <property type="term" value="F:ribosomal large subunit binding"/>
    <property type="evidence" value="ECO:0007669"/>
    <property type="project" value="TreeGrafter"/>
</dbReference>
<dbReference type="GO" id="GO:0002184">
    <property type="term" value="P:cytoplasmic translational termination"/>
    <property type="evidence" value="ECO:0007669"/>
    <property type="project" value="TreeGrafter"/>
</dbReference>
<dbReference type="CDD" id="cd00520">
    <property type="entry name" value="RRF"/>
    <property type="match status" value="1"/>
</dbReference>
<dbReference type="FunFam" id="1.10.132.20:FF:000001">
    <property type="entry name" value="Ribosome-recycling factor"/>
    <property type="match status" value="1"/>
</dbReference>
<dbReference type="FunFam" id="3.30.1360.40:FF:000001">
    <property type="entry name" value="Ribosome-recycling factor"/>
    <property type="match status" value="1"/>
</dbReference>
<dbReference type="Gene3D" id="3.30.1360.40">
    <property type="match status" value="1"/>
</dbReference>
<dbReference type="Gene3D" id="1.10.132.20">
    <property type="entry name" value="Ribosome-recycling factor"/>
    <property type="match status" value="1"/>
</dbReference>
<dbReference type="HAMAP" id="MF_00040">
    <property type="entry name" value="RRF"/>
    <property type="match status" value="1"/>
</dbReference>
<dbReference type="InterPro" id="IPR002661">
    <property type="entry name" value="Ribosome_recyc_fac"/>
</dbReference>
<dbReference type="InterPro" id="IPR023584">
    <property type="entry name" value="Ribosome_recyc_fac_dom"/>
</dbReference>
<dbReference type="InterPro" id="IPR036191">
    <property type="entry name" value="RRF_sf"/>
</dbReference>
<dbReference type="NCBIfam" id="TIGR00496">
    <property type="entry name" value="frr"/>
    <property type="match status" value="1"/>
</dbReference>
<dbReference type="PANTHER" id="PTHR20982:SF3">
    <property type="entry name" value="MITOCHONDRIAL RIBOSOME RECYCLING FACTOR PSEUDO 1"/>
    <property type="match status" value="1"/>
</dbReference>
<dbReference type="PANTHER" id="PTHR20982">
    <property type="entry name" value="RIBOSOME RECYCLING FACTOR"/>
    <property type="match status" value="1"/>
</dbReference>
<dbReference type="Pfam" id="PF01765">
    <property type="entry name" value="RRF"/>
    <property type="match status" value="1"/>
</dbReference>
<dbReference type="SUPFAM" id="SSF55194">
    <property type="entry name" value="Ribosome recycling factor, RRF"/>
    <property type="match status" value="1"/>
</dbReference>
<gene>
    <name evidence="1" type="primary">frr</name>
    <name type="ordered locus">BQ06980</name>
</gene>
<keyword id="KW-0963">Cytoplasm</keyword>
<keyword id="KW-0648">Protein biosynthesis</keyword>
<organism>
    <name type="scientific">Bartonella quintana (strain Toulouse)</name>
    <name type="common">Rochalimaea quintana</name>
    <dbReference type="NCBI Taxonomy" id="283165"/>
    <lineage>
        <taxon>Bacteria</taxon>
        <taxon>Pseudomonadati</taxon>
        <taxon>Pseudomonadota</taxon>
        <taxon>Alphaproteobacteria</taxon>
        <taxon>Hyphomicrobiales</taxon>
        <taxon>Bartonellaceae</taxon>
        <taxon>Bartonella</taxon>
    </lineage>
</organism>
<evidence type="ECO:0000255" key="1">
    <source>
        <dbReference type="HAMAP-Rule" id="MF_00040"/>
    </source>
</evidence>
<comment type="function">
    <text evidence="1">Responsible for the release of ribosomes from messenger RNA at the termination of protein biosynthesis. May increase the efficiency of translation by recycling ribosomes from one round of translation to another.</text>
</comment>
<comment type="subcellular location">
    <subcellularLocation>
        <location evidence="1">Cytoplasm</location>
    </subcellularLocation>
</comment>
<comment type="similarity">
    <text evidence="1">Belongs to the RRF family.</text>
</comment>